<protein>
    <recommendedName>
        <fullName evidence="1">Large ribosomal subunit protein eL13</fullName>
    </recommendedName>
    <alternativeName>
        <fullName>60S ribosomal protein L13</fullName>
    </alternativeName>
    <alternativeName>
        <fullName>BBC1 protein homolog</fullName>
    </alternativeName>
</protein>
<comment type="similarity">
    <text evidence="1">Belongs to the eukaryotic ribosomal protein eL13 family.</text>
</comment>
<reference key="1">
    <citation type="submission" date="1997-11" db="EMBL/GenBank/DDBJ databases">
        <title>Isolation of several anti-stress genes from the halotolerant green alga Chlamydomonas by a simple functional expression screening in E. coli.</title>
        <authorList>
            <person name="Kanaboshi H."/>
            <person name="Ikeda K."/>
            <person name="Miyasaka H."/>
        </authorList>
    </citation>
    <scope>NUCLEOTIDE SEQUENCE [MRNA]</scope>
</reference>
<feature type="chain" id="PRO_0000192933" description="Large ribosomal subunit protein eL13">
    <location>
        <begin position="1"/>
        <end position="208"/>
    </location>
</feature>
<accession>O48513</accession>
<keyword id="KW-0687">Ribonucleoprotein</keyword>
<keyword id="KW-0689">Ribosomal protein</keyword>
<proteinExistence type="evidence at transcript level"/>
<gene>
    <name type="primary">RPL13</name>
    <name type="synonym">BBC1</name>
</gene>
<organism>
    <name type="scientific">Chlamydomonas sp. (strain W80)</name>
    <dbReference type="NCBI Taxonomy" id="103365"/>
    <lineage>
        <taxon>Eukaryota</taxon>
        <taxon>Viridiplantae</taxon>
        <taxon>Chlorophyta</taxon>
        <taxon>core chlorophytes</taxon>
        <taxon>Chlorophyceae</taxon>
        <taxon>CS clade</taxon>
        <taxon>Chlamydomonadales</taxon>
        <taxon>Chlamydomonadaceae</taxon>
        <taxon>Chlamydomonas</taxon>
    </lineage>
</organism>
<name>RL13_CHLSW</name>
<sequence>MVRGNDMLPNGHFHKKWQFHVKTWFNQPARKQRRRNARAEKAKATFPRPVAGSLKPIVRCQTVKYNTKQRLGRGFTLEELKEAGIPAKFAPTVGIAVDHRRKNRSLETLQANVQRLKTYRASLVIFPRNMKKPKAFEASAADCSAASQAKGELLPLKGTKPALELVKITADMKEGSQYGKLRIERVNARLKGMREKRAADEAAKKDDK</sequence>
<evidence type="ECO:0000305" key="1"/>
<dbReference type="EMBL" id="AB009086">
    <property type="protein sequence ID" value="BAA23724.1"/>
    <property type="molecule type" value="mRNA"/>
</dbReference>
<dbReference type="SMR" id="O48513"/>
<dbReference type="GO" id="GO:0022625">
    <property type="term" value="C:cytosolic large ribosomal subunit"/>
    <property type="evidence" value="ECO:0007669"/>
    <property type="project" value="TreeGrafter"/>
</dbReference>
<dbReference type="GO" id="GO:0003723">
    <property type="term" value="F:RNA binding"/>
    <property type="evidence" value="ECO:0007669"/>
    <property type="project" value="TreeGrafter"/>
</dbReference>
<dbReference type="GO" id="GO:0003735">
    <property type="term" value="F:structural constituent of ribosome"/>
    <property type="evidence" value="ECO:0007669"/>
    <property type="project" value="InterPro"/>
</dbReference>
<dbReference type="GO" id="GO:0006412">
    <property type="term" value="P:translation"/>
    <property type="evidence" value="ECO:0007669"/>
    <property type="project" value="InterPro"/>
</dbReference>
<dbReference type="Gene3D" id="1.20.5.110">
    <property type="match status" value="1"/>
</dbReference>
<dbReference type="HAMAP" id="MF_00499">
    <property type="entry name" value="Ribosomal_eL13"/>
    <property type="match status" value="1"/>
</dbReference>
<dbReference type="InterPro" id="IPR001380">
    <property type="entry name" value="Ribosomal_eL13"/>
</dbReference>
<dbReference type="InterPro" id="IPR018256">
    <property type="entry name" value="Ribosomal_eL13_CS"/>
</dbReference>
<dbReference type="PANTHER" id="PTHR11722">
    <property type="entry name" value="60S RIBOSOMAL PROTEIN L13"/>
    <property type="match status" value="1"/>
</dbReference>
<dbReference type="PANTHER" id="PTHR11722:SF0">
    <property type="entry name" value="LARGE RIBOSOMAL SUBUNIT PROTEIN EL13"/>
    <property type="match status" value="1"/>
</dbReference>
<dbReference type="Pfam" id="PF01294">
    <property type="entry name" value="Ribosomal_L13e"/>
    <property type="match status" value="1"/>
</dbReference>
<dbReference type="PROSITE" id="PS01104">
    <property type="entry name" value="RIBOSOMAL_L13E"/>
    <property type="match status" value="1"/>
</dbReference>